<comment type="function">
    <text evidence="3 6 7 10 11 12">Cleaves phosphorylated sphingoid bases (PSBs), such as sphingosine-1-phosphate, into fatty aldehydes and phosphoethanolamine (PubMed:20097939, PubMed:9464245). Elevates stress-induced ceramide production and apoptosis (PubMed:9464245). Required for global lipid homeostasis in liver and cholesterol homeostasis in fibroblasts (PubMed:20097939, PubMed:28262793). Involved in the regulation of pro-inflammatory response and neutrophil trafficking (PubMed:21173151). Modulates neuronal autophagy via phosphoethanolamine production which regulates accumulation of aggregate-prone proteins such as APP (PubMed:28521611). Seems to play a role in establishing neuronal contact sites and axonal maintenance (By similarity).</text>
</comment>
<comment type="catalytic activity">
    <reaction evidence="12">
        <text>sphinganine 1-phosphate = hexadecanal + phosphoethanolamine</text>
        <dbReference type="Rhea" id="RHEA:18593"/>
        <dbReference type="ChEBI" id="CHEBI:17600"/>
        <dbReference type="ChEBI" id="CHEBI:57939"/>
        <dbReference type="ChEBI" id="CHEBI:58190"/>
        <dbReference type="EC" id="4.1.2.27"/>
    </reaction>
</comment>
<comment type="catalytic activity">
    <reaction evidence="2">
        <text>sphing-4-enine 1-phosphate = (2E)-hexadecenal + phosphoethanolamine</text>
        <dbReference type="Rhea" id="RHEA:33507"/>
        <dbReference type="ChEBI" id="CHEBI:17585"/>
        <dbReference type="ChEBI" id="CHEBI:58190"/>
        <dbReference type="ChEBI" id="CHEBI:60119"/>
        <dbReference type="EC" id="4.1.2.27"/>
    </reaction>
</comment>
<comment type="cofactor">
    <cofactor evidence="2">
        <name>pyridoxal 5'-phosphate</name>
        <dbReference type="ChEBI" id="CHEBI:597326"/>
    </cofactor>
</comment>
<comment type="pathway">
    <text evidence="12">Lipid metabolism; sphingolipid metabolism.</text>
</comment>
<comment type="subcellular location">
    <subcellularLocation>
        <location evidence="5 8">Endoplasmic reticulum membrane</location>
        <topology evidence="5">Single-pass type III membrane protein</topology>
        <orientation evidence="5">Cytoplasmic side</orientation>
    </subcellularLocation>
</comment>
<comment type="tissue specificity">
    <text evidence="5 6 8 12">Highest levels are found in liver, small intestine and thymus, followed by kidney, lung, heart, spleen and brain (at protein level). Also detected in stomach, testis and skeletal muscle (at protein level).</text>
</comment>
<comment type="developmental stage">
    <text evidence="5">Expressed throughout mouse embryogenesis.A transient increase is observed from 5.5 dpc to 7.5 dpc.</text>
</comment>
<comment type="disruption phenotype">
    <text evidence="6 7 8 9 11 12">Mutant animals have a shortened lifespan (PubMed:21173151). Mutant mice show an increase of sphingoid base phosphates, but also other sphingolipids (including sphingosine, ceramide, and sphingomyelin) in the serum and/or liver, resulting in changes in the levels of serum and liver lipids not directly within the sphingolipid pathway, including phospholipids, triacyglycerol, diacylglycerol, and cholesterol (PubMed:20097939). They are deficient in B and T lymphocytes yet have high blood levels of neutrophils and monocytes along with elevated expression of pro-inflammatory cytokines. Their tissues are largely clear of infiltrating leukocytes and their neutrophils are defective in migration to chemotactic stimulus (PubMed:21173151). Mice lacking Sgpl1 exhibit complete podocyte foot process effacement and absence of slit diaphragms in kidney (PubMed:28165339, PubMed:9464245). They display hypoalbuminemia and an elevated urinary albumin/creatinine ratio (PubMed:28165339). They also display abnormal adrenal gland morphology and defective expression of enzymes involved in steroidogenesis in this tissue (PubMed:28165343). Conditional knockout in brain significantly reduces phosphoethanolamine levels with alterations in basal and stimulated autophagy involving decreased conversion of LC3-I to LC3-II, increased levels of lysosomal markers and aggregate-prone proteins such as APP and SNCA. Animals show profound deficits in cognitive skills (PubMed:28521611).</text>
</comment>
<comment type="similarity">
    <text evidence="14">Belongs to the group II decarboxylase family. Sphingosine-1-phosphate lyase subfamily.</text>
</comment>
<feature type="chain" id="PRO_0000147013" description="Sphingosine-1-phosphate lyase 1">
    <location>
        <begin position="1"/>
        <end position="568"/>
    </location>
</feature>
<feature type="topological domain" description="Lumenal" evidence="4">
    <location>
        <begin position="1"/>
        <end position="40"/>
    </location>
</feature>
<feature type="transmembrane region" description="Helical; Signal-anchor for type III membrane protein" evidence="5">
    <location>
        <begin position="41"/>
        <end position="61"/>
    </location>
</feature>
<feature type="topological domain" description="Cytoplasmic" evidence="5">
    <location>
        <begin position="62"/>
        <end position="568"/>
    </location>
</feature>
<feature type="modified residue" description="N6-(pyridoxal phosphate)lysine; alternate" evidence="1">
    <location>
        <position position="353"/>
    </location>
</feature>
<feature type="modified residue" description="N6-acetyllysine; alternate" evidence="2">
    <location>
        <position position="353"/>
    </location>
</feature>
<feature type="modified residue" description="3'-nitrotyrosine" evidence="2">
    <location>
        <position position="356"/>
    </location>
</feature>
<feature type="modified residue" description="3'-nitrotyrosine" evidence="2">
    <location>
        <position position="366"/>
    </location>
</feature>
<feature type="modified residue" description="Phosphoserine" evidence="2">
    <location>
        <position position="564"/>
    </location>
</feature>
<feature type="sequence conflict" description="In Ref. 1; AAC03768." evidence="14" ref="1">
    <original>A</original>
    <variation>T</variation>
    <location>
        <position position="305"/>
    </location>
</feature>
<feature type="sequence conflict" description="In Ref. 2; BAC31437." evidence="14" ref="2">
    <original>N</original>
    <variation>K</variation>
    <location>
        <position position="473"/>
    </location>
</feature>
<name>SGPL1_MOUSE</name>
<gene>
    <name evidence="15" type="primary">Sgpl1</name>
    <name evidence="13" type="synonym">Spl</name>
</gene>
<evidence type="ECO:0000250" key="1"/>
<evidence type="ECO:0000250" key="2">
    <source>
        <dbReference type="UniProtKB" id="O95470"/>
    </source>
</evidence>
<evidence type="ECO:0000250" key="3">
    <source>
        <dbReference type="UniProtKB" id="Q9V7Y2"/>
    </source>
</evidence>
<evidence type="ECO:0000255" key="4"/>
<evidence type="ECO:0000269" key="5">
    <source>
    </source>
</evidence>
<evidence type="ECO:0000269" key="6">
    <source>
    </source>
</evidence>
<evidence type="ECO:0000269" key="7">
    <source>
    </source>
</evidence>
<evidence type="ECO:0000269" key="8">
    <source>
    </source>
</evidence>
<evidence type="ECO:0000269" key="9">
    <source>
    </source>
</evidence>
<evidence type="ECO:0000269" key="10">
    <source>
    </source>
</evidence>
<evidence type="ECO:0000269" key="11">
    <source>
    </source>
</evidence>
<evidence type="ECO:0000269" key="12">
    <source>
    </source>
</evidence>
<evidence type="ECO:0000303" key="13">
    <source>
    </source>
</evidence>
<evidence type="ECO:0000305" key="14"/>
<evidence type="ECO:0000312" key="15">
    <source>
        <dbReference type="MGI" id="MGI:1261415"/>
    </source>
</evidence>
<proteinExistence type="evidence at protein level"/>
<dbReference type="EC" id="4.1.2.27" evidence="12"/>
<dbReference type="EMBL" id="AF036894">
    <property type="protein sequence ID" value="AAC03768.1"/>
    <property type="molecule type" value="mRNA"/>
</dbReference>
<dbReference type="EMBL" id="AK036747">
    <property type="protein sequence ID" value="BAC29562.1"/>
    <property type="molecule type" value="mRNA"/>
</dbReference>
<dbReference type="EMBL" id="AK037789">
    <property type="protein sequence ID" value="BAC29872.1"/>
    <property type="molecule type" value="mRNA"/>
</dbReference>
<dbReference type="EMBL" id="AK043024">
    <property type="protein sequence ID" value="BAC31437.1"/>
    <property type="molecule type" value="mRNA"/>
</dbReference>
<dbReference type="EMBL" id="AK049342">
    <property type="protein sequence ID" value="BAC33695.1"/>
    <property type="molecule type" value="mRNA"/>
</dbReference>
<dbReference type="EMBL" id="BC026135">
    <property type="protein sequence ID" value="AAH26135.1"/>
    <property type="molecule type" value="mRNA"/>
</dbReference>
<dbReference type="CCDS" id="CCDS35914.1"/>
<dbReference type="PIR" id="JC5923">
    <property type="entry name" value="JC5923"/>
</dbReference>
<dbReference type="RefSeq" id="NP_001303602.1">
    <property type="nucleotide sequence ID" value="NM_001316673.1"/>
</dbReference>
<dbReference type="RefSeq" id="NP_001303603.1">
    <property type="nucleotide sequence ID" value="NM_001316674.1"/>
</dbReference>
<dbReference type="RefSeq" id="NP_033189.2">
    <property type="nucleotide sequence ID" value="NM_009163.4"/>
</dbReference>
<dbReference type="RefSeq" id="XP_017169349.1">
    <property type="nucleotide sequence ID" value="XM_017313860.3"/>
</dbReference>
<dbReference type="RefSeq" id="XP_036011604.1">
    <property type="nucleotide sequence ID" value="XM_036155711.1"/>
</dbReference>
<dbReference type="SMR" id="Q8R0X7"/>
<dbReference type="BioGRID" id="203199">
    <property type="interactions" value="18"/>
</dbReference>
<dbReference type="FunCoup" id="Q8R0X7">
    <property type="interactions" value="2344"/>
</dbReference>
<dbReference type="IntAct" id="Q8R0X7">
    <property type="interactions" value="1"/>
</dbReference>
<dbReference type="MINT" id="Q8R0X7"/>
<dbReference type="STRING" id="10090.ENSMUSP00000112975"/>
<dbReference type="BindingDB" id="Q8R0X7"/>
<dbReference type="ChEMBL" id="CHEMBL5009"/>
<dbReference type="DrugCentral" id="Q8R0X7"/>
<dbReference type="SwissLipids" id="SLP:000000935"/>
<dbReference type="GlyGen" id="Q8R0X7">
    <property type="glycosylation" value="1 site, 1 O-linked glycan (1 site)"/>
</dbReference>
<dbReference type="iPTMnet" id="Q8R0X7"/>
<dbReference type="PhosphoSitePlus" id="Q8R0X7"/>
<dbReference type="SwissPalm" id="Q8R0X7"/>
<dbReference type="jPOST" id="Q8R0X7"/>
<dbReference type="PaxDb" id="10090-ENSMUSP00000112975"/>
<dbReference type="ProteomicsDB" id="256988"/>
<dbReference type="Pumba" id="Q8R0X7"/>
<dbReference type="Antibodypedia" id="14941">
    <property type="antibodies" value="178 antibodies from 24 providers"/>
</dbReference>
<dbReference type="DNASU" id="20397"/>
<dbReference type="Ensembl" id="ENSMUST00000092498.12">
    <property type="protein sequence ID" value="ENSMUSP00000090155.6"/>
    <property type="gene ID" value="ENSMUSG00000020097.15"/>
</dbReference>
<dbReference type="Ensembl" id="ENSMUST00000122259.8">
    <property type="protein sequence ID" value="ENSMUSP00000112975.2"/>
    <property type="gene ID" value="ENSMUSG00000020097.15"/>
</dbReference>
<dbReference type="GeneID" id="20397"/>
<dbReference type="KEGG" id="mmu:20397"/>
<dbReference type="UCSC" id="uc007ffk.2">
    <property type="organism name" value="mouse"/>
</dbReference>
<dbReference type="AGR" id="MGI:1261415"/>
<dbReference type="CTD" id="8879"/>
<dbReference type="MGI" id="MGI:1261415">
    <property type="gene designation" value="Sgpl1"/>
</dbReference>
<dbReference type="VEuPathDB" id="HostDB:ENSMUSG00000020097"/>
<dbReference type="eggNOG" id="KOG1383">
    <property type="taxonomic scope" value="Eukaryota"/>
</dbReference>
<dbReference type="GeneTree" id="ENSGT00390000000046"/>
<dbReference type="HOGENOM" id="CLU_028929_1_1_1"/>
<dbReference type="InParanoid" id="Q8R0X7"/>
<dbReference type="OMA" id="FKDHQFT"/>
<dbReference type="OrthoDB" id="10254570at2759"/>
<dbReference type="PhylomeDB" id="Q8R0X7"/>
<dbReference type="TreeFam" id="TF300777"/>
<dbReference type="BRENDA" id="4.1.2.27">
    <property type="organism ID" value="3474"/>
</dbReference>
<dbReference type="Reactome" id="R-MMU-9845614">
    <property type="pathway name" value="Sphingolipid catabolism"/>
</dbReference>
<dbReference type="UniPathway" id="UPA00222"/>
<dbReference type="BioGRID-ORCS" id="20397">
    <property type="hits" value="3 hits in 80 CRISPR screens"/>
</dbReference>
<dbReference type="ChiTaRS" id="Sgpl1">
    <property type="organism name" value="mouse"/>
</dbReference>
<dbReference type="PRO" id="PR:Q8R0X7"/>
<dbReference type="Proteomes" id="UP000000589">
    <property type="component" value="Chromosome 10"/>
</dbReference>
<dbReference type="RNAct" id="Q8R0X7">
    <property type="molecule type" value="protein"/>
</dbReference>
<dbReference type="Bgee" id="ENSMUSG00000020097">
    <property type="expression patterns" value="Expressed in urinary bladder urothelium and 257 other cell types or tissues"/>
</dbReference>
<dbReference type="ExpressionAtlas" id="Q8R0X7">
    <property type="expression patterns" value="baseline and differential"/>
</dbReference>
<dbReference type="GO" id="GO:0005783">
    <property type="term" value="C:endoplasmic reticulum"/>
    <property type="evidence" value="ECO:0000314"/>
    <property type="project" value="UniProtKB"/>
</dbReference>
<dbReference type="GO" id="GO:0005789">
    <property type="term" value="C:endoplasmic reticulum membrane"/>
    <property type="evidence" value="ECO:0007669"/>
    <property type="project" value="UniProtKB-SubCell"/>
</dbReference>
<dbReference type="GO" id="GO:0030170">
    <property type="term" value="F:pyridoxal phosphate binding"/>
    <property type="evidence" value="ECO:0007669"/>
    <property type="project" value="InterPro"/>
</dbReference>
<dbReference type="GO" id="GO:0008117">
    <property type="term" value="F:sphinganine-1-phosphate aldolase activity"/>
    <property type="evidence" value="ECO:0000250"/>
    <property type="project" value="UniProtKB"/>
</dbReference>
<dbReference type="GO" id="GO:0008209">
    <property type="term" value="P:androgen metabolic process"/>
    <property type="evidence" value="ECO:0000315"/>
    <property type="project" value="MGI"/>
</dbReference>
<dbReference type="GO" id="GO:0097190">
    <property type="term" value="P:apoptotic signaling pathway"/>
    <property type="evidence" value="ECO:0000250"/>
    <property type="project" value="UniProtKB"/>
</dbReference>
<dbReference type="GO" id="GO:0006672">
    <property type="term" value="P:ceramide metabolic process"/>
    <property type="evidence" value="ECO:0000250"/>
    <property type="project" value="UniProtKB"/>
</dbReference>
<dbReference type="GO" id="GO:0008210">
    <property type="term" value="P:estrogen metabolic process"/>
    <property type="evidence" value="ECO:0000315"/>
    <property type="project" value="MGI"/>
</dbReference>
<dbReference type="GO" id="GO:0060325">
    <property type="term" value="P:face morphogenesis"/>
    <property type="evidence" value="ECO:0000315"/>
    <property type="project" value="MGI"/>
</dbReference>
<dbReference type="GO" id="GO:0006631">
    <property type="term" value="P:fatty acid metabolic process"/>
    <property type="evidence" value="ECO:0000250"/>
    <property type="project" value="UniProtKB"/>
</dbReference>
<dbReference type="GO" id="GO:0008585">
    <property type="term" value="P:female gonad development"/>
    <property type="evidence" value="ECO:0000315"/>
    <property type="project" value="MGI"/>
</dbReference>
<dbReference type="GO" id="GO:0010761">
    <property type="term" value="P:fibroblast migration"/>
    <property type="evidence" value="ECO:0000315"/>
    <property type="project" value="MGI"/>
</dbReference>
<dbReference type="GO" id="GO:0030097">
    <property type="term" value="P:hemopoiesis"/>
    <property type="evidence" value="ECO:0000315"/>
    <property type="project" value="MGI"/>
</dbReference>
<dbReference type="GO" id="GO:0001822">
    <property type="term" value="P:kidney development"/>
    <property type="evidence" value="ECO:0000315"/>
    <property type="project" value="MGI"/>
</dbReference>
<dbReference type="GO" id="GO:0033327">
    <property type="term" value="P:Leydig cell differentiation"/>
    <property type="evidence" value="ECO:0000315"/>
    <property type="project" value="MGI"/>
</dbReference>
<dbReference type="GO" id="GO:0001553">
    <property type="term" value="P:luteinization"/>
    <property type="evidence" value="ECO:0000315"/>
    <property type="project" value="MGI"/>
</dbReference>
<dbReference type="GO" id="GO:0048008">
    <property type="term" value="P:platelet-derived growth factor receptor signaling pathway"/>
    <property type="evidence" value="ECO:0000315"/>
    <property type="project" value="MGI"/>
</dbReference>
<dbReference type="GO" id="GO:0009791">
    <property type="term" value="P:post-embryonic development"/>
    <property type="evidence" value="ECO:0000315"/>
    <property type="project" value="MGI"/>
</dbReference>
<dbReference type="GO" id="GO:0040014">
    <property type="term" value="P:regulation of multicellular organism growth"/>
    <property type="evidence" value="ECO:0000315"/>
    <property type="project" value="MGI"/>
</dbReference>
<dbReference type="GO" id="GO:0060021">
    <property type="term" value="P:roof of mouth development"/>
    <property type="evidence" value="ECO:0000315"/>
    <property type="project" value="MGI"/>
</dbReference>
<dbReference type="GO" id="GO:0048705">
    <property type="term" value="P:skeletal system morphogenesis"/>
    <property type="evidence" value="ECO:0000315"/>
    <property type="project" value="MGI"/>
</dbReference>
<dbReference type="GO" id="GO:0007283">
    <property type="term" value="P:spermatogenesis"/>
    <property type="evidence" value="ECO:0000315"/>
    <property type="project" value="MGI"/>
</dbReference>
<dbReference type="GO" id="GO:0030149">
    <property type="term" value="P:sphingolipid catabolic process"/>
    <property type="evidence" value="ECO:0000250"/>
    <property type="project" value="UniProtKB"/>
</dbReference>
<dbReference type="GO" id="GO:0001570">
    <property type="term" value="P:vasculogenesis"/>
    <property type="evidence" value="ECO:0000315"/>
    <property type="project" value="MGI"/>
</dbReference>
<dbReference type="CDD" id="cd06450">
    <property type="entry name" value="DOPA_deC_like"/>
    <property type="match status" value="1"/>
</dbReference>
<dbReference type="FunFam" id="3.90.1150.10:FF:000020">
    <property type="entry name" value="Sphingosine-1-phosphate lyase 1"/>
    <property type="match status" value="1"/>
</dbReference>
<dbReference type="FunFam" id="6.10.140.2150:FF:000001">
    <property type="entry name" value="Sphingosine-1-phosphate lyase 1"/>
    <property type="match status" value="1"/>
</dbReference>
<dbReference type="FunFam" id="3.40.640.10:FF:000020">
    <property type="entry name" value="sphingosine-1-phosphate lyase 1"/>
    <property type="match status" value="1"/>
</dbReference>
<dbReference type="Gene3D" id="6.10.140.2150">
    <property type="match status" value="1"/>
</dbReference>
<dbReference type="Gene3D" id="3.90.1150.10">
    <property type="entry name" value="Aspartate Aminotransferase, domain 1"/>
    <property type="match status" value="1"/>
</dbReference>
<dbReference type="Gene3D" id="3.40.640.10">
    <property type="entry name" value="Type I PLP-dependent aspartate aminotransferase-like (Major domain)"/>
    <property type="match status" value="1"/>
</dbReference>
<dbReference type="InterPro" id="IPR050477">
    <property type="entry name" value="GrpII_AminoAcid_Decarb"/>
</dbReference>
<dbReference type="InterPro" id="IPR002129">
    <property type="entry name" value="PyrdxlP-dep_de-COase"/>
</dbReference>
<dbReference type="InterPro" id="IPR015424">
    <property type="entry name" value="PyrdxlP-dep_Trfase"/>
</dbReference>
<dbReference type="InterPro" id="IPR015421">
    <property type="entry name" value="PyrdxlP-dep_Trfase_major"/>
</dbReference>
<dbReference type="InterPro" id="IPR015422">
    <property type="entry name" value="PyrdxlP-dep_Trfase_small"/>
</dbReference>
<dbReference type="PANTHER" id="PTHR42735">
    <property type="match status" value="1"/>
</dbReference>
<dbReference type="PANTHER" id="PTHR42735:SF6">
    <property type="entry name" value="SPHINGOSINE-1-PHOSPHATE LYASE 1"/>
    <property type="match status" value="1"/>
</dbReference>
<dbReference type="Pfam" id="PF00282">
    <property type="entry name" value="Pyridoxal_deC"/>
    <property type="match status" value="1"/>
</dbReference>
<dbReference type="SUPFAM" id="SSF53383">
    <property type="entry name" value="PLP-dependent transferases"/>
    <property type="match status" value="1"/>
</dbReference>
<reference key="1">
    <citation type="journal article" date="1998" name="Biochem. Biophys. Res. Commun.">
        <title>Identification of the first mammalian sphingosine phosphate lyase gene and its functional expression in yeast.</title>
        <authorList>
            <person name="Zhou J."/>
            <person name="Saba J.D."/>
        </authorList>
    </citation>
    <scope>NUCLEOTIDE SEQUENCE [MRNA]</scope>
    <scope>FUNCTION</scope>
    <scope>CATALYTIC ACTIVITY</scope>
    <scope>TISSUE SPECIFICITY</scope>
    <source>
        <strain>C57BL/6J</strain>
    </source>
</reference>
<reference key="2">
    <citation type="journal article" date="2005" name="Science">
        <title>The transcriptional landscape of the mammalian genome.</title>
        <authorList>
            <person name="Carninci P."/>
            <person name="Kasukawa T."/>
            <person name="Katayama S."/>
            <person name="Gough J."/>
            <person name="Frith M.C."/>
            <person name="Maeda N."/>
            <person name="Oyama R."/>
            <person name="Ravasi T."/>
            <person name="Lenhard B."/>
            <person name="Wells C."/>
            <person name="Kodzius R."/>
            <person name="Shimokawa K."/>
            <person name="Bajic V.B."/>
            <person name="Brenner S.E."/>
            <person name="Batalov S."/>
            <person name="Forrest A.R."/>
            <person name="Zavolan M."/>
            <person name="Davis M.J."/>
            <person name="Wilming L.G."/>
            <person name="Aidinis V."/>
            <person name="Allen J.E."/>
            <person name="Ambesi-Impiombato A."/>
            <person name="Apweiler R."/>
            <person name="Aturaliya R.N."/>
            <person name="Bailey T.L."/>
            <person name="Bansal M."/>
            <person name="Baxter L."/>
            <person name="Beisel K.W."/>
            <person name="Bersano T."/>
            <person name="Bono H."/>
            <person name="Chalk A.M."/>
            <person name="Chiu K.P."/>
            <person name="Choudhary V."/>
            <person name="Christoffels A."/>
            <person name="Clutterbuck D.R."/>
            <person name="Crowe M.L."/>
            <person name="Dalla E."/>
            <person name="Dalrymple B.P."/>
            <person name="de Bono B."/>
            <person name="Della Gatta G."/>
            <person name="di Bernardo D."/>
            <person name="Down T."/>
            <person name="Engstrom P."/>
            <person name="Fagiolini M."/>
            <person name="Faulkner G."/>
            <person name="Fletcher C.F."/>
            <person name="Fukushima T."/>
            <person name="Furuno M."/>
            <person name="Futaki S."/>
            <person name="Gariboldi M."/>
            <person name="Georgii-Hemming P."/>
            <person name="Gingeras T.R."/>
            <person name="Gojobori T."/>
            <person name="Green R.E."/>
            <person name="Gustincich S."/>
            <person name="Harbers M."/>
            <person name="Hayashi Y."/>
            <person name="Hensch T.K."/>
            <person name="Hirokawa N."/>
            <person name="Hill D."/>
            <person name="Huminiecki L."/>
            <person name="Iacono M."/>
            <person name="Ikeo K."/>
            <person name="Iwama A."/>
            <person name="Ishikawa T."/>
            <person name="Jakt M."/>
            <person name="Kanapin A."/>
            <person name="Katoh M."/>
            <person name="Kawasawa Y."/>
            <person name="Kelso J."/>
            <person name="Kitamura H."/>
            <person name="Kitano H."/>
            <person name="Kollias G."/>
            <person name="Krishnan S.P."/>
            <person name="Kruger A."/>
            <person name="Kummerfeld S.K."/>
            <person name="Kurochkin I.V."/>
            <person name="Lareau L.F."/>
            <person name="Lazarevic D."/>
            <person name="Lipovich L."/>
            <person name="Liu J."/>
            <person name="Liuni S."/>
            <person name="McWilliam S."/>
            <person name="Madan Babu M."/>
            <person name="Madera M."/>
            <person name="Marchionni L."/>
            <person name="Matsuda H."/>
            <person name="Matsuzawa S."/>
            <person name="Miki H."/>
            <person name="Mignone F."/>
            <person name="Miyake S."/>
            <person name="Morris K."/>
            <person name="Mottagui-Tabar S."/>
            <person name="Mulder N."/>
            <person name="Nakano N."/>
            <person name="Nakauchi H."/>
            <person name="Ng P."/>
            <person name="Nilsson R."/>
            <person name="Nishiguchi S."/>
            <person name="Nishikawa S."/>
            <person name="Nori F."/>
            <person name="Ohara O."/>
            <person name="Okazaki Y."/>
            <person name="Orlando V."/>
            <person name="Pang K.C."/>
            <person name="Pavan W.J."/>
            <person name="Pavesi G."/>
            <person name="Pesole G."/>
            <person name="Petrovsky N."/>
            <person name="Piazza S."/>
            <person name="Reed J."/>
            <person name="Reid J.F."/>
            <person name="Ring B.Z."/>
            <person name="Ringwald M."/>
            <person name="Rost B."/>
            <person name="Ruan Y."/>
            <person name="Salzberg S.L."/>
            <person name="Sandelin A."/>
            <person name="Schneider C."/>
            <person name="Schoenbach C."/>
            <person name="Sekiguchi K."/>
            <person name="Semple C.A."/>
            <person name="Seno S."/>
            <person name="Sessa L."/>
            <person name="Sheng Y."/>
            <person name="Shibata Y."/>
            <person name="Shimada H."/>
            <person name="Shimada K."/>
            <person name="Silva D."/>
            <person name="Sinclair B."/>
            <person name="Sperling S."/>
            <person name="Stupka E."/>
            <person name="Sugiura K."/>
            <person name="Sultana R."/>
            <person name="Takenaka Y."/>
            <person name="Taki K."/>
            <person name="Tammoja K."/>
            <person name="Tan S.L."/>
            <person name="Tang S."/>
            <person name="Taylor M.S."/>
            <person name="Tegner J."/>
            <person name="Teichmann S.A."/>
            <person name="Ueda H.R."/>
            <person name="van Nimwegen E."/>
            <person name="Verardo R."/>
            <person name="Wei C.L."/>
            <person name="Yagi K."/>
            <person name="Yamanishi H."/>
            <person name="Zabarovsky E."/>
            <person name="Zhu S."/>
            <person name="Zimmer A."/>
            <person name="Hide W."/>
            <person name="Bult C."/>
            <person name="Grimmond S.M."/>
            <person name="Teasdale R.D."/>
            <person name="Liu E.T."/>
            <person name="Brusic V."/>
            <person name="Quackenbush J."/>
            <person name="Wahlestedt C."/>
            <person name="Mattick J.S."/>
            <person name="Hume D.A."/>
            <person name="Kai C."/>
            <person name="Sasaki D."/>
            <person name="Tomaru Y."/>
            <person name="Fukuda S."/>
            <person name="Kanamori-Katayama M."/>
            <person name="Suzuki M."/>
            <person name="Aoki J."/>
            <person name="Arakawa T."/>
            <person name="Iida J."/>
            <person name="Imamura K."/>
            <person name="Itoh M."/>
            <person name="Kato T."/>
            <person name="Kawaji H."/>
            <person name="Kawagashira N."/>
            <person name="Kawashima T."/>
            <person name="Kojima M."/>
            <person name="Kondo S."/>
            <person name="Konno H."/>
            <person name="Nakano K."/>
            <person name="Ninomiya N."/>
            <person name="Nishio T."/>
            <person name="Okada M."/>
            <person name="Plessy C."/>
            <person name="Shibata K."/>
            <person name="Shiraki T."/>
            <person name="Suzuki S."/>
            <person name="Tagami M."/>
            <person name="Waki K."/>
            <person name="Watahiki A."/>
            <person name="Okamura-Oho Y."/>
            <person name="Suzuki H."/>
            <person name="Kawai J."/>
            <person name="Hayashizaki Y."/>
        </authorList>
    </citation>
    <scope>NUCLEOTIDE SEQUENCE [LARGE SCALE MRNA]</scope>
    <source>
        <strain>C57BL/6J</strain>
        <tissue>Bone</tissue>
        <tissue>Thymus</tissue>
    </source>
</reference>
<reference key="3">
    <citation type="journal article" date="2004" name="Genome Res.">
        <title>The status, quality, and expansion of the NIH full-length cDNA project: the Mammalian Gene Collection (MGC).</title>
        <authorList>
            <consortium name="The MGC Project Team"/>
        </authorList>
    </citation>
    <scope>NUCLEOTIDE SEQUENCE [LARGE SCALE MRNA]</scope>
    <source>
        <tissue>Liver</tissue>
    </source>
</reference>
<reference key="4">
    <citation type="journal article" date="2004" name="Biochem. Biophys. Res. Commun.">
        <title>Sphingosine-1-phosphate lyase SPL is an endoplasmic reticulum-resident, integral membrane protein with the pyridoxal 5'-phosphate binding domain exposed to the cytosol.</title>
        <authorList>
            <person name="Ikeda M."/>
            <person name="Kihara A."/>
            <person name="Igarashi Y."/>
        </authorList>
    </citation>
    <scope>TISSUE SPECIFICITY</scope>
    <scope>SUBCELLULAR LOCATION</scope>
    <scope>TOPOLOGY</scope>
    <scope>DEVELOPMENTAL STAGE</scope>
</reference>
<reference key="5">
    <citation type="journal article" date="2010" name="Cell">
        <title>A tissue-specific atlas of mouse protein phosphorylation and expression.</title>
        <authorList>
            <person name="Huttlin E.L."/>
            <person name="Jedrychowski M.P."/>
            <person name="Elias J.E."/>
            <person name="Goswami T."/>
            <person name="Rad R."/>
            <person name="Beausoleil S.A."/>
            <person name="Villen J."/>
            <person name="Haas W."/>
            <person name="Sowa M.E."/>
            <person name="Gygi S.P."/>
        </authorList>
    </citation>
    <scope>IDENTIFICATION BY MASS SPECTROMETRY [LARGE SCALE ANALYSIS]</scope>
    <source>
        <tissue>Brain</tissue>
        <tissue>Brown adipose tissue</tissue>
        <tissue>Heart</tissue>
        <tissue>Kidney</tissue>
        <tissue>Liver</tissue>
        <tissue>Lung</tissue>
        <tissue>Pancreas</tissue>
        <tissue>Spleen</tissue>
        <tissue>Testis</tissue>
    </source>
</reference>
<reference key="6">
    <citation type="journal article" date="2010" name="J. Biol. Chem.">
        <title>Sphingosine 1-phosphate lyase deficiency disrupts lipid homeostasis in liver.</title>
        <authorList>
            <person name="Bektas M."/>
            <person name="Allende M.L."/>
            <person name="Lee B.G."/>
            <person name="Chen W."/>
            <person name="Amar M.J."/>
            <person name="Remaley A.T."/>
            <person name="Saba J.D."/>
            <person name="Proia R.L."/>
        </authorList>
    </citation>
    <scope>FUNCTION</scope>
    <scope>DISRUPTION PHENOTYPE</scope>
    <scope>TISSUE SPECIFICITY</scope>
</reference>
<reference key="7">
    <citation type="journal article" date="2011" name="J. Biol. Chem.">
        <title>Sphingosine-1-phosphate lyase deficiency produces a pro-inflammatory response while impairing neutrophil trafficking.</title>
        <authorList>
            <person name="Allende M.L."/>
            <person name="Bektas M."/>
            <person name="Lee B.G."/>
            <person name="Bonifacino E."/>
            <person name="Kang J."/>
            <person name="Tuymetova G."/>
            <person name="Chen W."/>
            <person name="Saba J.D."/>
            <person name="Proia R.L."/>
        </authorList>
    </citation>
    <scope>FUNCTION</scope>
    <scope>DISRUPTION PHENOTYPE</scope>
</reference>
<reference key="8">
    <citation type="journal article" date="2017" name="Autophagy">
        <title>SGPL1 (sphingosine phosphate lyase 1) modulates neuronal autophagy via phosphatidylethanolamine production.</title>
        <authorList>
            <person name="Mitroi D.N."/>
            <person name="Karunakaran I."/>
            <person name="Graeler M."/>
            <person name="Saba J.D."/>
            <person name="Ehninger D."/>
            <person name="Ledesma M.D."/>
            <person name="van Echten-Deckert G."/>
        </authorList>
    </citation>
    <scope>FUNCTION</scope>
    <scope>DISRUPTION PHENOTYPE</scope>
</reference>
<reference key="9">
    <citation type="journal article" date="2017" name="J. Clin. Invest.">
        <title>Mutations in sphingosine-1-phosphate lyase cause nephrosis with ichthyosis and adrenal insufficiency.</title>
        <authorList>
            <person name="Lovric S."/>
            <person name="Goncalves S."/>
            <person name="Gee H.Y."/>
            <person name="Oskouian B."/>
            <person name="Srinivas H."/>
            <person name="Choi W.I."/>
            <person name="Shril S."/>
            <person name="Ashraf S."/>
            <person name="Tan W."/>
            <person name="Rao J."/>
            <person name="Airik M."/>
            <person name="Schapiro D."/>
            <person name="Braun D.A."/>
            <person name="Sadowski C.E."/>
            <person name="Widmeier E."/>
            <person name="Jobst-Schwan T."/>
            <person name="Schmidt J.M."/>
            <person name="Girik V."/>
            <person name="Capitani G."/>
            <person name="Suh J.H."/>
            <person name="Lachaussee N."/>
            <person name="Arrondel C."/>
            <person name="Patat J."/>
            <person name="Gribouval O."/>
            <person name="Furlano M."/>
            <person name="Boyer O."/>
            <person name="Schmitt A."/>
            <person name="Vuiblet V."/>
            <person name="Hashmi S."/>
            <person name="Wilcken R."/>
            <person name="Bernier F.P."/>
            <person name="Innes A.M."/>
            <person name="Parboosingh J.S."/>
            <person name="Lamont R.E."/>
            <person name="Midgley J.P."/>
            <person name="Wright N."/>
            <person name="Majewski J."/>
            <person name="Zenker M."/>
            <person name="Schaefer F."/>
            <person name="Kuss N."/>
            <person name="Greil J."/>
            <person name="Giese T."/>
            <person name="Schwarz K."/>
            <person name="Catheline V."/>
            <person name="Schanze D."/>
            <person name="Franke I."/>
            <person name="Sznajer Y."/>
            <person name="Truant A.S."/>
            <person name="Adams B."/>
            <person name="Desir J."/>
            <person name="Biemann R."/>
            <person name="Pei Y."/>
            <person name="Ars E."/>
            <person name="Lloberas N."/>
            <person name="Madrid A."/>
            <person name="Dharnidharka V.R."/>
            <person name="Connolly A.M."/>
            <person name="Willing M.C."/>
            <person name="Cooper M.A."/>
            <person name="Lifton R.P."/>
            <person name="Simons M."/>
            <person name="Riezman H."/>
            <person name="Antignac C."/>
            <person name="Saba J.D."/>
            <person name="Hildebrandt F."/>
        </authorList>
    </citation>
    <scope>DISRUPTION PHENOTYPE</scope>
    <scope>SUBCELLULAR LOCATION</scope>
    <scope>TISSUE SPECIFICITY</scope>
</reference>
<reference key="10">
    <citation type="journal article" date="2017" name="J. Clin. Invest.">
        <title>Sphingosine-1-phosphate lyase mutations cause primary adrenal insufficiency and steroid-resistant nephrotic syndrome.</title>
        <authorList>
            <person name="Prasad R."/>
            <person name="Hadjidemetriou I."/>
            <person name="Maharaj A."/>
            <person name="Meimaridou E."/>
            <person name="Buonocore F."/>
            <person name="Saleem M."/>
            <person name="Hurcombe J."/>
            <person name="Bierzynska A."/>
            <person name="Barbagelata E."/>
            <person name="Bergada I."/>
            <person name="Cassinelli H."/>
            <person name="Das U."/>
            <person name="Krone R."/>
            <person name="Hacihamdioglu B."/>
            <person name="Sari E."/>
            <person name="Yesilkaya E."/>
            <person name="Storr H.L."/>
            <person name="Clemente M."/>
            <person name="Fernandez-Cancio M."/>
            <person name="Camats N."/>
            <person name="Ram N."/>
            <person name="Achermann J.C."/>
            <person name="Van Veldhoven P.P."/>
            <person name="Guasti L."/>
            <person name="Braslavsky D."/>
            <person name="Guran T."/>
            <person name="Metherell L.A."/>
        </authorList>
    </citation>
    <scope>DISRUPTION PHENOTYPE</scope>
</reference>
<reference key="11">
    <citation type="journal article" date="2017" name="Sci. Rep.">
        <title>Characterization of cholesterol homeostasis in sphingosine-1-phosphate lyase-deficient fibroblasts reveals a Niemann-Pick disease type C-like phenotype with enhanced lysosomal Ca2+ storage.</title>
        <authorList>
            <person name="Vienken H."/>
            <person name="Mabrouki N."/>
            <person name="Grabau K."/>
            <person name="Claas R.F."/>
            <person name="Rudowski A."/>
            <person name="Schoemel N."/>
            <person name="Pfeilschifter J."/>
            <person name="Luetjohann D."/>
            <person name="van Echten-Deckert G."/>
            <person name="Meyer Zu Heringdorf D."/>
        </authorList>
    </citation>
    <scope>FUNCTION</scope>
</reference>
<keyword id="KW-0007">Acetylation</keyword>
<keyword id="KW-0053">Apoptosis</keyword>
<keyword id="KW-0256">Endoplasmic reticulum</keyword>
<keyword id="KW-0443">Lipid metabolism</keyword>
<keyword id="KW-0456">Lyase</keyword>
<keyword id="KW-0472">Membrane</keyword>
<keyword id="KW-0944">Nitration</keyword>
<keyword id="KW-0597">Phosphoprotein</keyword>
<keyword id="KW-0663">Pyridoxal phosphate</keyword>
<keyword id="KW-1185">Reference proteome</keyword>
<keyword id="KW-0735">Signal-anchor</keyword>
<keyword id="KW-0746">Sphingolipid metabolism</keyword>
<keyword id="KW-0812">Transmembrane</keyword>
<keyword id="KW-1133">Transmembrane helix</keyword>
<accession>Q8R0X7</accession>
<accession>O54955</accession>
<accession>Q8C942</accession>
<protein>
    <recommendedName>
        <fullName evidence="14">Sphingosine-1-phosphate lyase 1</fullName>
        <shortName>S1PL</shortName>
        <shortName>SP-lyase 1</shortName>
        <shortName>SPL 1</shortName>
        <shortName evidence="13">mSPL</shortName>
        <ecNumber evidence="12">4.1.2.27</ecNumber>
    </recommendedName>
    <alternativeName>
        <fullName>Sphingosine-1-phosphate aldolase</fullName>
    </alternativeName>
</protein>
<sequence>MPGTDLLKLKDFEPYLEILESYSTKAKNYVNGYCTKYEPWQLIAWSVLCTLLIVWVYELIFQPESLWSRFKKKLFKLIRKMPFIGRKIEQQVSKAKKDLVKNMPFLKVDKDYVKTLPAQGMGTAEVLERLKEYSSMDGSWQEGKASGAVYNGEPKLTELLVQAYGEFTWSNPLHPDIFPGLRKLEAEIVRMTCSLFNGGPDSCGCVTSGGTESILMACKAYRDLALEKGIKTPEIVAPESAHAAFDKAAHYFGMKIVRVALKKNMEVDVQAMKRAISRNTAMLVCSTPQFPHGVMDPVPEVAKLAVRYKIPLHVDACLGGFLIVFMEKAGYPLEKPFDFRVKGVTSISADTHKYGYAPKGSSVVMYSNEKYRTYQFFVGADWQGGVYASPSIAGSRPGGIIAACWAALMHFGENGYVEATKQIIKTARFLKSELENIKNIFIFGDPQLSVIALGSNDFDIYRLSNMMSAKGWNFNYLQFPRSIHFCITLVHTRKRVAIQFLKDIRESVTQIMKNPKAKTTGMGAIYGMAQATIDRKLVAEISSVFLDCLYTTDPVTQGNQMNGSPKPR</sequence>
<organism>
    <name type="scientific">Mus musculus</name>
    <name type="common">Mouse</name>
    <dbReference type="NCBI Taxonomy" id="10090"/>
    <lineage>
        <taxon>Eukaryota</taxon>
        <taxon>Metazoa</taxon>
        <taxon>Chordata</taxon>
        <taxon>Craniata</taxon>
        <taxon>Vertebrata</taxon>
        <taxon>Euteleostomi</taxon>
        <taxon>Mammalia</taxon>
        <taxon>Eutheria</taxon>
        <taxon>Euarchontoglires</taxon>
        <taxon>Glires</taxon>
        <taxon>Rodentia</taxon>
        <taxon>Myomorpha</taxon>
        <taxon>Muroidea</taxon>
        <taxon>Muridae</taxon>
        <taxon>Murinae</taxon>
        <taxon>Mus</taxon>
        <taxon>Mus</taxon>
    </lineage>
</organism>